<comment type="function">
    <text evidence="1">Probably functions as a manganese efflux pump.</text>
</comment>
<comment type="subcellular location">
    <subcellularLocation>
        <location evidence="1">Cell inner membrane</location>
        <topology evidence="1">Multi-pass membrane protein</topology>
    </subcellularLocation>
</comment>
<comment type="similarity">
    <text evidence="1">Belongs to the MntP (TC 9.B.29) family.</text>
</comment>
<name>MNTP_NEIG1</name>
<feature type="chain" id="PRO_0000155656" description="Putative manganese efflux pump MntP">
    <location>
        <begin position="1"/>
        <end position="188"/>
    </location>
</feature>
<feature type="transmembrane region" description="Helical" evidence="1">
    <location>
        <begin position="3"/>
        <end position="23"/>
    </location>
</feature>
<feature type="transmembrane region" description="Helical" evidence="1">
    <location>
        <begin position="35"/>
        <end position="55"/>
    </location>
</feature>
<feature type="transmembrane region" description="Helical" evidence="1">
    <location>
        <begin position="63"/>
        <end position="83"/>
    </location>
</feature>
<feature type="transmembrane region" description="Helical" evidence="1">
    <location>
        <begin position="104"/>
        <end position="126"/>
    </location>
</feature>
<feature type="transmembrane region" description="Helical" evidence="1">
    <location>
        <begin position="140"/>
        <end position="160"/>
    </location>
</feature>
<feature type="transmembrane region" description="Helical" evidence="1">
    <location>
        <begin position="167"/>
        <end position="187"/>
    </location>
</feature>
<accession>Q5F600</accession>
<protein>
    <recommendedName>
        <fullName evidence="1">Putative manganese efflux pump MntP</fullName>
    </recommendedName>
</protein>
<proteinExistence type="inferred from homology"/>
<dbReference type="EMBL" id="AE004969">
    <property type="protein sequence ID" value="AAW90387.1"/>
    <property type="molecule type" value="Genomic_DNA"/>
</dbReference>
<dbReference type="RefSeq" id="WP_003690352.1">
    <property type="nucleotide sequence ID" value="NC_002946.2"/>
</dbReference>
<dbReference type="RefSeq" id="YP_208799.1">
    <property type="nucleotide sequence ID" value="NC_002946.2"/>
</dbReference>
<dbReference type="STRING" id="242231.NGO_1768"/>
<dbReference type="KEGG" id="ngo:NGO_1768"/>
<dbReference type="PATRIC" id="fig|242231.10.peg.2119"/>
<dbReference type="HOGENOM" id="CLU_096410_0_0_4"/>
<dbReference type="Proteomes" id="UP000000535">
    <property type="component" value="Chromosome"/>
</dbReference>
<dbReference type="GO" id="GO:0005886">
    <property type="term" value="C:plasma membrane"/>
    <property type="evidence" value="ECO:0007669"/>
    <property type="project" value="UniProtKB-SubCell"/>
</dbReference>
<dbReference type="GO" id="GO:0005384">
    <property type="term" value="F:manganese ion transmembrane transporter activity"/>
    <property type="evidence" value="ECO:0007669"/>
    <property type="project" value="UniProtKB-UniRule"/>
</dbReference>
<dbReference type="HAMAP" id="MF_01521">
    <property type="entry name" value="MntP_pump"/>
    <property type="match status" value="1"/>
</dbReference>
<dbReference type="InterPro" id="IPR003810">
    <property type="entry name" value="Mntp/YtaF"/>
</dbReference>
<dbReference type="InterPro" id="IPR022929">
    <property type="entry name" value="Put_MntP"/>
</dbReference>
<dbReference type="PANTHER" id="PTHR35529">
    <property type="entry name" value="MANGANESE EFFLUX PUMP MNTP-RELATED"/>
    <property type="match status" value="1"/>
</dbReference>
<dbReference type="PANTHER" id="PTHR35529:SF1">
    <property type="entry name" value="MANGANESE EFFLUX PUMP MNTP-RELATED"/>
    <property type="match status" value="1"/>
</dbReference>
<dbReference type="Pfam" id="PF02659">
    <property type="entry name" value="Mntp"/>
    <property type="match status" value="1"/>
</dbReference>
<evidence type="ECO:0000255" key="1">
    <source>
        <dbReference type="HAMAP-Rule" id="MF_01521"/>
    </source>
</evidence>
<sequence length="188" mass="19778">MSLYALLLVALGMSMDAFAVALAKGAAVRMPPRKIAATALVFGTVEAFMPLAGWVGGFYAKPFISEWDHWVAFVLLGGLGLKMMREGLSGEAEDVRESKQESLWMTVLTAFGTSIDSMIVGVGLAFMEVNIAFAAAVIGMAATVMVTIGLTAGKAFGVLFGRRAEFAGGLVLIAIGTWTLLSHLGLIQ</sequence>
<reference key="1">
    <citation type="submission" date="2003-03" db="EMBL/GenBank/DDBJ databases">
        <title>The complete genome sequence of Neisseria gonorrhoeae.</title>
        <authorList>
            <person name="Lewis L.A."/>
            <person name="Gillaspy A.F."/>
            <person name="McLaughlin R.E."/>
            <person name="Gipson M."/>
            <person name="Ducey T.F."/>
            <person name="Ownbey T."/>
            <person name="Hartman K."/>
            <person name="Nydick C."/>
            <person name="Carson M.B."/>
            <person name="Vaughn J."/>
            <person name="Thomson C."/>
            <person name="Song L."/>
            <person name="Lin S."/>
            <person name="Yuan X."/>
            <person name="Najar F."/>
            <person name="Zhan M."/>
            <person name="Ren Q."/>
            <person name="Zhu H."/>
            <person name="Qi S."/>
            <person name="Kenton S.M."/>
            <person name="Lai H."/>
            <person name="White J.D."/>
            <person name="Clifton S."/>
            <person name="Roe B.A."/>
            <person name="Dyer D.W."/>
        </authorList>
    </citation>
    <scope>NUCLEOTIDE SEQUENCE [LARGE SCALE GENOMIC DNA]</scope>
    <source>
        <strain>ATCC 700825 / FA 1090</strain>
    </source>
</reference>
<organism>
    <name type="scientific">Neisseria gonorrhoeae (strain ATCC 700825 / FA 1090)</name>
    <dbReference type="NCBI Taxonomy" id="242231"/>
    <lineage>
        <taxon>Bacteria</taxon>
        <taxon>Pseudomonadati</taxon>
        <taxon>Pseudomonadota</taxon>
        <taxon>Betaproteobacteria</taxon>
        <taxon>Neisseriales</taxon>
        <taxon>Neisseriaceae</taxon>
        <taxon>Neisseria</taxon>
    </lineage>
</organism>
<gene>
    <name evidence="1" type="primary">mntP</name>
    <name type="ordered locus">NGO_1768</name>
</gene>
<keyword id="KW-0997">Cell inner membrane</keyword>
<keyword id="KW-1003">Cell membrane</keyword>
<keyword id="KW-0406">Ion transport</keyword>
<keyword id="KW-0464">Manganese</keyword>
<keyword id="KW-0472">Membrane</keyword>
<keyword id="KW-1185">Reference proteome</keyword>
<keyword id="KW-0812">Transmembrane</keyword>
<keyword id="KW-1133">Transmembrane helix</keyword>
<keyword id="KW-0813">Transport</keyword>